<sequence>MKDFSDVILCMEATESSKTEFCNPAFEPESGPPCPPPVFPEDASYSVPAPWHGRRPRGLRPDCRFSWLCVLLLSSLLLLLLGLLVAIILAQLQAAPPSGASHSPLPAGGLTTTTTTPTITTSQAAGTPKGQQESGVSPSPQSTCGGLLSGPRGFFSSPNYPDPYPPNTHCVWHIQVATDHAIQLKIEALSIESVASCLFDRLELSPEPEGPLLRVCGRVPPPTLNTNASHLLVVFVSDSSVEGFGFHAWYQAMAPGRGSCAHDEFRCDQLICLLPDSVCDGFANCADGSDETNCSAKFSGCGGNLTGLQGTFSTPSYLQQYPHQLLCTWHISVPAGHSIELQFHNFSLEAQDECKFDYVEVYETSSSGAFSLLGRFCGAEPPPHLVSSHHELAVLFRTDHGISSGGFSATYLAFNATENPCGPSELSCQAGGCKGVQWMCDMWRDCTDGSDDNCSGPLFPPPELACEPVQVEMCLGLSYNTTAFPNIWVGMITQEEVVEVLSGYKSLTSLPCYQHFRRLLCGLLVPRCTPLGSVLPPCRSVCQEAEHQCQSGLALLGTPWPFNCNRLPEAADLEACAQP</sequence>
<gene>
    <name type="primary">MFRP</name>
</gene>
<accession>Q9BY79</accession>
<accession>B0YJ36</accession>
<accession>B0YJ37</accession>
<accession>B4DHN8</accession>
<accession>Q335M3</accession>
<accession>Q96DQ9</accession>
<feature type="chain" id="PRO_0000228132" description="Membrane frizzled-related protein">
    <location>
        <begin position="1"/>
        <end position="579"/>
    </location>
</feature>
<feature type="topological domain" description="Cytoplasmic" evidence="2">
    <location>
        <begin position="1"/>
        <end position="69"/>
    </location>
</feature>
<feature type="transmembrane region" description="Helical; Signal-anchor for type II membrane protein" evidence="2">
    <location>
        <begin position="70"/>
        <end position="90"/>
    </location>
</feature>
<feature type="topological domain" description="Extracellular" evidence="2">
    <location>
        <begin position="91"/>
        <end position="579"/>
    </location>
</feature>
<feature type="domain" description="CUB 1" evidence="3">
    <location>
        <begin position="144"/>
        <end position="253"/>
    </location>
</feature>
<feature type="domain" description="LDL-receptor class A 1" evidence="5">
    <location>
        <begin position="259"/>
        <end position="295"/>
    </location>
</feature>
<feature type="domain" description="CUB 2" evidence="3">
    <location>
        <begin position="301"/>
        <end position="414"/>
    </location>
</feature>
<feature type="domain" description="LDL-receptor class A 2" evidence="5">
    <location>
        <begin position="420"/>
        <end position="455"/>
    </location>
</feature>
<feature type="domain" description="FZ" evidence="4">
    <location>
        <begin position="461"/>
        <end position="579"/>
    </location>
</feature>
<feature type="region of interest" description="Disordered" evidence="6">
    <location>
        <begin position="100"/>
        <end position="143"/>
    </location>
</feature>
<feature type="compositionally biased region" description="Low complexity" evidence="6">
    <location>
        <begin position="111"/>
        <end position="121"/>
    </location>
</feature>
<feature type="compositionally biased region" description="Polar residues" evidence="6">
    <location>
        <begin position="122"/>
        <end position="143"/>
    </location>
</feature>
<feature type="glycosylation site" description="N-linked (GlcNAc...) asparagine" evidence="2">
    <location>
        <position position="227"/>
    </location>
</feature>
<feature type="glycosylation site" description="N-linked (GlcNAc...) asparagine" evidence="2">
    <location>
        <position position="415"/>
    </location>
</feature>
<feature type="disulfide bond" evidence="1">
    <location>
        <begin position="144"/>
        <end position="170"/>
    </location>
</feature>
<feature type="disulfide bond" evidence="1">
    <location>
        <begin position="197"/>
        <end position="216"/>
    </location>
</feature>
<feature type="disulfide bond" evidence="1">
    <location>
        <begin position="260"/>
        <end position="272"/>
    </location>
</feature>
<feature type="disulfide bond" evidence="1">
    <location>
        <begin position="267"/>
        <end position="285"/>
    </location>
</feature>
<feature type="disulfide bond" evidence="1">
    <location>
        <begin position="279"/>
        <end position="294"/>
    </location>
</feature>
<feature type="disulfide bond" evidence="1">
    <location>
        <begin position="301"/>
        <end position="327"/>
    </location>
</feature>
<feature type="disulfide bond" evidence="1">
    <location>
        <begin position="354"/>
        <end position="377"/>
    </location>
</feature>
<feature type="disulfide bond" evidence="1">
    <location>
        <begin position="421"/>
        <end position="433"/>
    </location>
</feature>
<feature type="disulfide bond" evidence="1">
    <location>
        <begin position="428"/>
        <end position="446"/>
    </location>
</feature>
<feature type="disulfide bond" evidence="1">
    <location>
        <begin position="440"/>
        <end position="454"/>
    </location>
</feature>
<feature type="disulfide bond" evidence="1">
    <location>
        <begin position="466"/>
        <end position="528"/>
    </location>
</feature>
<feature type="disulfide bond" evidence="1">
    <location>
        <begin position="474"/>
        <end position="521"/>
    </location>
</feature>
<feature type="disulfide bond" evidence="1">
    <location>
        <begin position="512"/>
        <end position="549"/>
    </location>
</feature>
<feature type="disulfide bond" evidence="1">
    <location>
        <begin position="538"/>
        <end position="576"/>
    </location>
</feature>
<feature type="disulfide bond" evidence="1">
    <location>
        <begin position="542"/>
        <end position="564"/>
    </location>
</feature>
<feature type="splice variant" id="VSP_055928" description="In isoform 2." evidence="16">
    <original>CGGNLTGLQGTFSTPSYLQQYPHQLLCTWHISVPAGHSIELQFHNFSLEAQDECKFDYVEVYETSSSGAFSLLGRFCGAEPPPHLVS</original>
    <variation>SVEQSHPPTSSPRTMSWLCCLGQIMASAVEASQPPTWPSMPRRTPVGPVSSPARQEGVRVCSGCVTCGETAPMAAMTTAAAPCSHPQ</variation>
    <location>
        <begin position="301"/>
        <end position="387"/>
    </location>
</feature>
<feature type="splice variant" id="VSP_055929" description="In isoform 2." evidence="16">
    <location>
        <begin position="388"/>
        <end position="505"/>
    </location>
</feature>
<feature type="sequence variant" id="VAR_025691" description="In dbSNP:rs139436396." evidence="10">
    <original>R</original>
    <variation>G</variation>
    <location>
        <position position="54"/>
    </location>
</feature>
<feature type="sequence variant" id="VAR_025692" description="In dbSNP:rs4639950." evidence="10">
    <original>I</original>
    <variation>V</variation>
    <location>
        <position position="119"/>
    </location>
</feature>
<feature type="sequence variant" id="VAR_025693" description="In dbSNP:rs3814762." evidence="9 10">
    <original>V</original>
    <variation>M</variation>
    <location>
        <position position="136"/>
    </location>
</feature>
<feature type="sequence variant" id="VAR_025694" description="In NNO2; dbSNP:rs121908190." evidence="8">
    <original>I</original>
    <variation>T</variation>
    <location>
        <position position="182"/>
    </location>
</feature>
<feature type="sequence variant" id="VAR_075401" description="Found in a patient with high hyperopia; uncertain significance; dbSNP:rs767183449." evidence="14">
    <original>P</original>
    <variation>T</variation>
    <location>
        <position position="222"/>
    </location>
</feature>
<feature type="sequence variant" id="VAR_071160" description="Requires 2 nucleotide substitutions." evidence="15">
    <original>S</original>
    <variation>D</variation>
    <location>
        <position position="259"/>
    </location>
</feature>
<feature type="sequence variant" id="VAR_025695" description="In dbSNP:rs139725672." evidence="10">
    <original>G</original>
    <variation>S</variation>
    <location>
        <position position="449"/>
    </location>
</feature>
<feature type="sequence variant" id="VAR_025696" description="In dbSNP:rs368172459." evidence="10">
    <original>Q</original>
    <variation>H</variation>
    <location>
        <position position="514"/>
    </location>
</feature>
<feature type="sequence variant" id="VAR_075402" description="Found in a patient with high hyperopia; uncertain significance; dbSNP:rs730882144." evidence="14">
    <original>R</original>
    <variation>W</variation>
    <location>
        <position position="517"/>
    </location>
</feature>
<feature type="sequence variant" id="VAR_075403" description="Found in a patient with high hyperopia; uncertain significance; dbSNP:rs374823079." evidence="14">
    <original>R</original>
    <variation>C</variation>
    <location>
        <position position="539"/>
    </location>
</feature>
<feature type="sequence conflict" description="In Ref. 2; CAH93521." evidence="17" ref="2">
    <original>P</original>
    <variation>Q</variation>
    <location>
        <position position="40"/>
    </location>
</feature>
<feature type="sequence conflict" description="In Ref. 2; CAH93521." evidence="17" ref="2">
    <location>
        <position position="83"/>
    </location>
</feature>
<feature type="sequence conflict" description="In Ref. 3; BAB70859." evidence="17" ref="3">
    <original>A</original>
    <variation>S</variation>
    <location>
        <position position="393"/>
    </location>
</feature>
<protein>
    <recommendedName>
        <fullName>Membrane frizzled-related protein</fullName>
    </recommendedName>
    <alternativeName>
        <fullName>Membrane-type frizzled-related protein</fullName>
    </alternativeName>
</protein>
<evidence type="ECO:0000250" key="1"/>
<evidence type="ECO:0000255" key="2"/>
<evidence type="ECO:0000255" key="3">
    <source>
        <dbReference type="PROSITE-ProRule" id="PRU00059"/>
    </source>
</evidence>
<evidence type="ECO:0000255" key="4">
    <source>
        <dbReference type="PROSITE-ProRule" id="PRU00090"/>
    </source>
</evidence>
<evidence type="ECO:0000255" key="5">
    <source>
        <dbReference type="PROSITE-ProRule" id="PRU00124"/>
    </source>
</evidence>
<evidence type="ECO:0000256" key="6">
    <source>
        <dbReference type="SAM" id="MobiDB-lite"/>
    </source>
</evidence>
<evidence type="ECO:0000269" key="7">
    <source>
    </source>
</evidence>
<evidence type="ECO:0000269" key="8">
    <source>
    </source>
</evidence>
<evidence type="ECO:0000269" key="9">
    <source>
    </source>
</evidence>
<evidence type="ECO:0000269" key="10">
    <source>
    </source>
</evidence>
<evidence type="ECO:0000269" key="11">
    <source>
    </source>
</evidence>
<evidence type="ECO:0000269" key="12">
    <source>
    </source>
</evidence>
<evidence type="ECO:0000269" key="13">
    <source>
    </source>
</evidence>
<evidence type="ECO:0000269" key="14">
    <source>
    </source>
</evidence>
<evidence type="ECO:0000269" key="15">
    <source ref="4"/>
</evidence>
<evidence type="ECO:0000303" key="16">
    <source>
    </source>
</evidence>
<evidence type="ECO:0000305" key="17"/>
<dbReference type="EMBL" id="AB055505">
    <property type="protein sequence ID" value="BAB39771.1"/>
    <property type="molecule type" value="mRNA"/>
</dbReference>
<dbReference type="EMBL" id="AJ862823">
    <property type="protein sequence ID" value="CAH93521.1"/>
    <property type="molecule type" value="mRNA"/>
</dbReference>
<dbReference type="EMBL" id="AK055132">
    <property type="protein sequence ID" value="BAB70859.1"/>
    <property type="molecule type" value="mRNA"/>
</dbReference>
<dbReference type="EMBL" id="AK295203">
    <property type="protein sequence ID" value="BAG58200.1"/>
    <property type="molecule type" value="mRNA"/>
</dbReference>
<dbReference type="EMBL" id="EF444994">
    <property type="protein sequence ID" value="ACA06013.1"/>
    <property type="molecule type" value="Genomic_DNA"/>
</dbReference>
<dbReference type="EMBL" id="EF444994">
    <property type="protein sequence ID" value="ACA06015.1"/>
    <property type="molecule type" value="Genomic_DNA"/>
</dbReference>
<dbReference type="EMBL" id="AP003396">
    <property type="status" value="NOT_ANNOTATED_CDS"/>
    <property type="molecule type" value="Genomic_DNA"/>
</dbReference>
<dbReference type="EMBL" id="CH471065">
    <property type="protein sequence ID" value="EAW67483.1"/>
    <property type="molecule type" value="Genomic_DNA"/>
</dbReference>
<dbReference type="CCDS" id="CCDS8421.1">
    <molecule id="Q9BY79-1"/>
</dbReference>
<dbReference type="PIR" id="JC7629">
    <property type="entry name" value="JC7629"/>
</dbReference>
<dbReference type="RefSeq" id="NP_113621.1">
    <molecule id="Q9BY79-1"/>
    <property type="nucleotide sequence ID" value="NM_031433.4"/>
</dbReference>
<dbReference type="SMR" id="Q9BY79"/>
<dbReference type="BioGRID" id="123684">
    <property type="interactions" value="1"/>
</dbReference>
<dbReference type="FunCoup" id="Q9BY79">
    <property type="interactions" value="80"/>
</dbReference>
<dbReference type="IntAct" id="Q9BY79">
    <property type="interactions" value="2"/>
</dbReference>
<dbReference type="MINT" id="Q9BY79"/>
<dbReference type="STRING" id="9606.ENSP00000481824"/>
<dbReference type="GlyCosmos" id="Q9BY79">
    <property type="glycosylation" value="2 sites, No reported glycans"/>
</dbReference>
<dbReference type="GlyGen" id="Q9BY79">
    <property type="glycosylation" value="2 sites"/>
</dbReference>
<dbReference type="PhosphoSitePlus" id="Q9BY79"/>
<dbReference type="BioMuta" id="MFRP"/>
<dbReference type="DMDM" id="74717666"/>
<dbReference type="PaxDb" id="9606-ENSP00000391664"/>
<dbReference type="PeptideAtlas" id="Q9BY79"/>
<dbReference type="ProteomicsDB" id="4232"/>
<dbReference type="ProteomicsDB" id="79601">
    <molecule id="Q9BY79-1"/>
</dbReference>
<dbReference type="Antibodypedia" id="32688">
    <property type="antibodies" value="113 antibodies from 18 providers"/>
</dbReference>
<dbReference type="DNASU" id="83552"/>
<dbReference type="Ensembl" id="ENST00000360167.4">
    <molecule id="Q9BY79-2"/>
    <property type="protein sequence ID" value="ENSP00000353291.4"/>
    <property type="gene ID" value="ENSG00000235718.9"/>
</dbReference>
<dbReference type="Ensembl" id="ENST00000619721.6">
    <molecule id="Q9BY79-1"/>
    <property type="protein sequence ID" value="ENSP00000481824.1"/>
    <property type="gene ID" value="ENSG00000235718.9"/>
</dbReference>
<dbReference type="GeneID" id="83552"/>
<dbReference type="KEGG" id="hsa:83552"/>
<dbReference type="MANE-Select" id="ENST00000619721.6">
    <property type="protein sequence ID" value="ENSP00000481824.1"/>
    <property type="RefSeq nucleotide sequence ID" value="NM_031433.4"/>
    <property type="RefSeq protein sequence ID" value="NP_113621.1"/>
</dbReference>
<dbReference type="UCSC" id="uc001pwj.3">
    <molecule id="Q9BY79-1"/>
    <property type="organism name" value="human"/>
</dbReference>
<dbReference type="AGR" id="HGNC:18121"/>
<dbReference type="CTD" id="83552"/>
<dbReference type="DisGeNET" id="83552"/>
<dbReference type="GeneCards" id="MFRP"/>
<dbReference type="HGNC" id="HGNC:18121">
    <property type="gene designation" value="MFRP"/>
</dbReference>
<dbReference type="HPA" id="ENSG00000235718">
    <property type="expression patterns" value="Tissue enriched (choroid)"/>
</dbReference>
<dbReference type="MalaCards" id="MFRP"/>
<dbReference type="MIM" id="606227">
    <property type="type" value="gene"/>
</dbReference>
<dbReference type="MIM" id="609549">
    <property type="type" value="phenotype"/>
</dbReference>
<dbReference type="MIM" id="611040">
    <property type="type" value="phenotype"/>
</dbReference>
<dbReference type="neXtProt" id="NX_Q9BY79"/>
<dbReference type="OpenTargets" id="ENSG00000235718"/>
<dbReference type="Orphanet" id="251279">
    <property type="disease" value="Microphthalmia-retinitis pigmentosa-foveoschisis-optic disc drusen syndrome"/>
</dbReference>
<dbReference type="Orphanet" id="35612">
    <property type="disease" value="Nanophthalmos"/>
</dbReference>
<dbReference type="PharmGKB" id="PA30776"/>
<dbReference type="VEuPathDB" id="HostDB:ENSG00000235718"/>
<dbReference type="eggNOG" id="KOG3577">
    <property type="taxonomic scope" value="Eukaryota"/>
</dbReference>
<dbReference type="eggNOG" id="KOG4292">
    <property type="taxonomic scope" value="Eukaryota"/>
</dbReference>
<dbReference type="GeneTree" id="ENSGT00940000154525"/>
<dbReference type="HOGENOM" id="CLU_032137_0_0_1"/>
<dbReference type="InParanoid" id="Q9BY79"/>
<dbReference type="OMA" id="WMCDLWR"/>
<dbReference type="OrthoDB" id="9991628at2759"/>
<dbReference type="PAN-GO" id="Q9BY79">
    <property type="GO annotations" value="0 GO annotations based on evolutionary models"/>
</dbReference>
<dbReference type="PhylomeDB" id="Q9BY79"/>
<dbReference type="TreeFam" id="TF316506"/>
<dbReference type="PathwayCommons" id="Q9BY79"/>
<dbReference type="BioGRID-ORCS" id="83552">
    <property type="hits" value="14 hits in 1132 CRISPR screens"/>
</dbReference>
<dbReference type="GenomeRNAi" id="83552"/>
<dbReference type="Pharos" id="Q9BY79">
    <property type="development level" value="Tbio"/>
</dbReference>
<dbReference type="PRO" id="PR:Q9BY79"/>
<dbReference type="Proteomes" id="UP000005640">
    <property type="component" value="Chromosome 11"/>
</dbReference>
<dbReference type="RNAct" id="Q9BY79">
    <property type="molecule type" value="protein"/>
</dbReference>
<dbReference type="Bgee" id="ENSG00000235718">
    <property type="expression patterns" value="Expressed in primordial germ cell in gonad and 24 other cell types or tissues"/>
</dbReference>
<dbReference type="ExpressionAtlas" id="Q9BY79">
    <property type="expression patterns" value="baseline and differential"/>
</dbReference>
<dbReference type="GO" id="GO:0016324">
    <property type="term" value="C:apical plasma membrane"/>
    <property type="evidence" value="ECO:0007669"/>
    <property type="project" value="UniProtKB-SubCell"/>
</dbReference>
<dbReference type="GO" id="GO:0016020">
    <property type="term" value="C:membrane"/>
    <property type="evidence" value="ECO:0000304"/>
    <property type="project" value="UniProtKB"/>
</dbReference>
<dbReference type="GO" id="GO:0009792">
    <property type="term" value="P:embryo development ending in birth or egg hatching"/>
    <property type="evidence" value="ECO:0000303"/>
    <property type="project" value="UniProtKB"/>
</dbReference>
<dbReference type="GO" id="GO:0042462">
    <property type="term" value="P:eye photoreceptor cell development"/>
    <property type="evidence" value="ECO:0007669"/>
    <property type="project" value="Ensembl"/>
</dbReference>
<dbReference type="GO" id="GO:0060041">
    <property type="term" value="P:retina development in camera-type eye"/>
    <property type="evidence" value="ECO:0007669"/>
    <property type="project" value="Ensembl"/>
</dbReference>
<dbReference type="GO" id="GO:0007601">
    <property type="term" value="P:visual perception"/>
    <property type="evidence" value="ECO:0007669"/>
    <property type="project" value="Ensembl"/>
</dbReference>
<dbReference type="CDD" id="cd07066">
    <property type="entry name" value="CRD_FZ"/>
    <property type="match status" value="1"/>
</dbReference>
<dbReference type="CDD" id="cd00041">
    <property type="entry name" value="CUB"/>
    <property type="match status" value="2"/>
</dbReference>
<dbReference type="CDD" id="cd00112">
    <property type="entry name" value="LDLa"/>
    <property type="match status" value="2"/>
</dbReference>
<dbReference type="FunFam" id="2.60.120.290:FF:000013">
    <property type="entry name" value="Membrane frizzled-related protein"/>
    <property type="match status" value="1"/>
</dbReference>
<dbReference type="FunFam" id="1.10.2000.10:FF:000015">
    <property type="entry name" value="membrane frizzled-related protein"/>
    <property type="match status" value="1"/>
</dbReference>
<dbReference type="FunFam" id="2.60.120.290:FF:000005">
    <property type="entry name" value="Procollagen C-endopeptidase enhancer 1"/>
    <property type="match status" value="1"/>
</dbReference>
<dbReference type="FunFam" id="4.10.400.10:FF:000067">
    <property type="entry name" value="Serine peptidase inhibitor, Kunitz type 1"/>
    <property type="match status" value="1"/>
</dbReference>
<dbReference type="Gene3D" id="1.10.2000.10">
    <property type="entry name" value="Frizzled cysteine-rich domain"/>
    <property type="match status" value="1"/>
</dbReference>
<dbReference type="Gene3D" id="4.10.400.10">
    <property type="entry name" value="Low-density Lipoprotein Receptor"/>
    <property type="match status" value="2"/>
</dbReference>
<dbReference type="Gene3D" id="2.60.120.290">
    <property type="entry name" value="Spermadhesin, CUB domain"/>
    <property type="match status" value="2"/>
</dbReference>
<dbReference type="InterPro" id="IPR000859">
    <property type="entry name" value="CUB_dom"/>
</dbReference>
<dbReference type="InterPro" id="IPR020067">
    <property type="entry name" value="Frizzled_dom"/>
</dbReference>
<dbReference type="InterPro" id="IPR036790">
    <property type="entry name" value="Frizzled_dom_sf"/>
</dbReference>
<dbReference type="InterPro" id="IPR036055">
    <property type="entry name" value="LDL_receptor-like_sf"/>
</dbReference>
<dbReference type="InterPro" id="IPR023415">
    <property type="entry name" value="LDLR_class-A_CS"/>
</dbReference>
<dbReference type="InterPro" id="IPR002172">
    <property type="entry name" value="LDrepeatLR_classA_rpt"/>
</dbReference>
<dbReference type="InterPro" id="IPR035914">
    <property type="entry name" value="Sperma_CUB_dom_sf"/>
</dbReference>
<dbReference type="PANTHER" id="PTHR24251:SF30">
    <property type="entry name" value="MEMBRANE FRIZZLED-RELATED PROTEIN"/>
    <property type="match status" value="1"/>
</dbReference>
<dbReference type="PANTHER" id="PTHR24251">
    <property type="entry name" value="OVOCHYMASE-RELATED"/>
    <property type="match status" value="1"/>
</dbReference>
<dbReference type="Pfam" id="PF00431">
    <property type="entry name" value="CUB"/>
    <property type="match status" value="2"/>
</dbReference>
<dbReference type="Pfam" id="PF01392">
    <property type="entry name" value="Fz"/>
    <property type="match status" value="1"/>
</dbReference>
<dbReference type="Pfam" id="PF00057">
    <property type="entry name" value="Ldl_recept_a"/>
    <property type="match status" value="1"/>
</dbReference>
<dbReference type="PRINTS" id="PR00261">
    <property type="entry name" value="LDLRECEPTOR"/>
</dbReference>
<dbReference type="SMART" id="SM00042">
    <property type="entry name" value="CUB"/>
    <property type="match status" value="2"/>
</dbReference>
<dbReference type="SMART" id="SM00063">
    <property type="entry name" value="FRI"/>
    <property type="match status" value="1"/>
</dbReference>
<dbReference type="SMART" id="SM00192">
    <property type="entry name" value="LDLa"/>
    <property type="match status" value="2"/>
</dbReference>
<dbReference type="SUPFAM" id="SSF63501">
    <property type="entry name" value="Frizzled cysteine-rich domain"/>
    <property type="match status" value="1"/>
</dbReference>
<dbReference type="SUPFAM" id="SSF57424">
    <property type="entry name" value="LDL receptor-like module"/>
    <property type="match status" value="2"/>
</dbReference>
<dbReference type="SUPFAM" id="SSF49854">
    <property type="entry name" value="Spermadhesin, CUB domain"/>
    <property type="match status" value="2"/>
</dbReference>
<dbReference type="PROSITE" id="PS01180">
    <property type="entry name" value="CUB"/>
    <property type="match status" value="2"/>
</dbReference>
<dbReference type="PROSITE" id="PS50038">
    <property type="entry name" value="FZ"/>
    <property type="match status" value="1"/>
</dbReference>
<dbReference type="PROSITE" id="PS01209">
    <property type="entry name" value="LDLRA_1"/>
    <property type="match status" value="1"/>
</dbReference>
<dbReference type="PROSITE" id="PS50068">
    <property type="entry name" value="LDLRA_2"/>
    <property type="match status" value="2"/>
</dbReference>
<organism>
    <name type="scientific">Homo sapiens</name>
    <name type="common">Human</name>
    <dbReference type="NCBI Taxonomy" id="9606"/>
    <lineage>
        <taxon>Eukaryota</taxon>
        <taxon>Metazoa</taxon>
        <taxon>Chordata</taxon>
        <taxon>Craniata</taxon>
        <taxon>Vertebrata</taxon>
        <taxon>Euteleostomi</taxon>
        <taxon>Mammalia</taxon>
        <taxon>Eutheria</taxon>
        <taxon>Euarchontoglires</taxon>
        <taxon>Primates</taxon>
        <taxon>Haplorrhini</taxon>
        <taxon>Catarrhini</taxon>
        <taxon>Hominidae</taxon>
        <taxon>Homo</taxon>
    </lineage>
</organism>
<reference key="1">
    <citation type="journal article" date="2001" name="Biochem. Biophys. Res. Commun.">
        <title>Molecular cloning and characterization of MFRP, a novel gene encoding a membrane-type frizzled-related protein.</title>
        <authorList>
            <person name="Katoh M."/>
        </authorList>
    </citation>
    <scope>NUCLEOTIDE SEQUENCE [MRNA] (ISOFORM 1)</scope>
    <scope>DEVELOPMENTAL STAGE</scope>
    <scope>TISSUE SPECIFICITY</scope>
    <source>
        <tissue>Fetal brain</tissue>
    </source>
</reference>
<reference key="2">
    <citation type="journal article" date="2005" name="Invest. Ophthalmol. Vis. Sci.">
        <title>Sequencing arrays for screening multiple genes associated with early-onset human retinal degenerations on a high-throughput platform.</title>
        <authorList>
            <person name="Mandal M.N.A."/>
            <person name="Heckenlively J.R."/>
            <person name="Burch T."/>
            <person name="Chen L."/>
            <person name="Vasireddy V."/>
            <person name="Koenekoop R.K."/>
            <person name="Sieving P.A."/>
            <person name="Ayyagari R."/>
        </authorList>
    </citation>
    <scope>NUCLEOTIDE SEQUENCE [MRNA] (ISOFORM 1)</scope>
    <scope>VARIANT MET-136</scope>
</reference>
<reference key="3">
    <citation type="journal article" date="2004" name="Nat. Genet.">
        <title>Complete sequencing and characterization of 21,243 full-length human cDNAs.</title>
        <authorList>
            <person name="Ota T."/>
            <person name="Suzuki Y."/>
            <person name="Nishikawa T."/>
            <person name="Otsuki T."/>
            <person name="Sugiyama T."/>
            <person name="Irie R."/>
            <person name="Wakamatsu A."/>
            <person name="Hayashi K."/>
            <person name="Sato H."/>
            <person name="Nagai K."/>
            <person name="Kimura K."/>
            <person name="Makita H."/>
            <person name="Sekine M."/>
            <person name="Obayashi M."/>
            <person name="Nishi T."/>
            <person name="Shibahara T."/>
            <person name="Tanaka T."/>
            <person name="Ishii S."/>
            <person name="Yamamoto J."/>
            <person name="Saito K."/>
            <person name="Kawai Y."/>
            <person name="Isono Y."/>
            <person name="Nakamura Y."/>
            <person name="Nagahari K."/>
            <person name="Murakami K."/>
            <person name="Yasuda T."/>
            <person name="Iwayanagi T."/>
            <person name="Wagatsuma M."/>
            <person name="Shiratori A."/>
            <person name="Sudo H."/>
            <person name="Hosoiri T."/>
            <person name="Kaku Y."/>
            <person name="Kodaira H."/>
            <person name="Kondo H."/>
            <person name="Sugawara M."/>
            <person name="Takahashi M."/>
            <person name="Kanda K."/>
            <person name="Yokoi T."/>
            <person name="Furuya T."/>
            <person name="Kikkawa E."/>
            <person name="Omura Y."/>
            <person name="Abe K."/>
            <person name="Kamihara K."/>
            <person name="Katsuta N."/>
            <person name="Sato K."/>
            <person name="Tanikawa M."/>
            <person name="Yamazaki M."/>
            <person name="Ninomiya K."/>
            <person name="Ishibashi T."/>
            <person name="Yamashita H."/>
            <person name="Murakawa K."/>
            <person name="Fujimori K."/>
            <person name="Tanai H."/>
            <person name="Kimata M."/>
            <person name="Watanabe M."/>
            <person name="Hiraoka S."/>
            <person name="Chiba Y."/>
            <person name="Ishida S."/>
            <person name="Ono Y."/>
            <person name="Takiguchi S."/>
            <person name="Watanabe S."/>
            <person name="Yosida M."/>
            <person name="Hotuta T."/>
            <person name="Kusano J."/>
            <person name="Kanehori K."/>
            <person name="Takahashi-Fujii A."/>
            <person name="Hara H."/>
            <person name="Tanase T.-O."/>
            <person name="Nomura Y."/>
            <person name="Togiya S."/>
            <person name="Komai F."/>
            <person name="Hara R."/>
            <person name="Takeuchi K."/>
            <person name="Arita M."/>
            <person name="Imose N."/>
            <person name="Musashino K."/>
            <person name="Yuuki H."/>
            <person name="Oshima A."/>
            <person name="Sasaki N."/>
            <person name="Aotsuka S."/>
            <person name="Yoshikawa Y."/>
            <person name="Matsunawa H."/>
            <person name="Ichihara T."/>
            <person name="Shiohata N."/>
            <person name="Sano S."/>
            <person name="Moriya S."/>
            <person name="Momiyama H."/>
            <person name="Satoh N."/>
            <person name="Takami S."/>
            <person name="Terashima Y."/>
            <person name="Suzuki O."/>
            <person name="Nakagawa S."/>
            <person name="Senoh A."/>
            <person name="Mizoguchi H."/>
            <person name="Goto Y."/>
            <person name="Shimizu F."/>
            <person name="Wakebe H."/>
            <person name="Hishigaki H."/>
            <person name="Watanabe T."/>
            <person name="Sugiyama A."/>
            <person name="Takemoto M."/>
            <person name="Kawakami B."/>
            <person name="Yamazaki M."/>
            <person name="Watanabe K."/>
            <person name="Kumagai A."/>
            <person name="Itakura S."/>
            <person name="Fukuzumi Y."/>
            <person name="Fujimori Y."/>
            <person name="Komiyama M."/>
            <person name="Tashiro H."/>
            <person name="Tanigami A."/>
            <person name="Fujiwara T."/>
            <person name="Ono T."/>
            <person name="Yamada K."/>
            <person name="Fujii Y."/>
            <person name="Ozaki K."/>
            <person name="Hirao M."/>
            <person name="Ohmori Y."/>
            <person name="Kawabata A."/>
            <person name="Hikiji T."/>
            <person name="Kobatake N."/>
            <person name="Inagaki H."/>
            <person name="Ikema Y."/>
            <person name="Okamoto S."/>
            <person name="Okitani R."/>
            <person name="Kawakami T."/>
            <person name="Noguchi S."/>
            <person name="Itoh T."/>
            <person name="Shigeta K."/>
            <person name="Senba T."/>
            <person name="Matsumura K."/>
            <person name="Nakajima Y."/>
            <person name="Mizuno T."/>
            <person name="Morinaga M."/>
            <person name="Sasaki M."/>
            <person name="Togashi T."/>
            <person name="Oyama M."/>
            <person name="Hata H."/>
            <person name="Watanabe M."/>
            <person name="Komatsu T."/>
            <person name="Mizushima-Sugano J."/>
            <person name="Satoh T."/>
            <person name="Shirai Y."/>
            <person name="Takahashi Y."/>
            <person name="Nakagawa K."/>
            <person name="Okumura K."/>
            <person name="Nagase T."/>
            <person name="Nomura N."/>
            <person name="Kikuchi H."/>
            <person name="Masuho Y."/>
            <person name="Yamashita R."/>
            <person name="Nakai K."/>
            <person name="Yada T."/>
            <person name="Nakamura Y."/>
            <person name="Ohara O."/>
            <person name="Isogai T."/>
            <person name="Sugano S."/>
        </authorList>
    </citation>
    <scope>NUCLEOTIDE SEQUENCE [LARGE SCALE MRNA] (ISOFORMS 1 AND 2)</scope>
    <source>
        <tissue>Brain</tissue>
        <tissue>Caudate nucleus</tissue>
    </source>
</reference>
<reference key="4">
    <citation type="submission" date="2007-02" db="EMBL/GenBank/DDBJ databases">
        <authorList>
            <consortium name="NHLBI resequencing and genotyping service (RS&amp;G)"/>
        </authorList>
    </citation>
    <scope>NUCLEOTIDE SEQUENCE [GENOMIC DNA]</scope>
    <scope>VARIANT ASP-259</scope>
</reference>
<reference key="5">
    <citation type="journal article" date="2006" name="Nature">
        <title>Human chromosome 11 DNA sequence and analysis including novel gene identification.</title>
        <authorList>
            <person name="Taylor T.D."/>
            <person name="Noguchi H."/>
            <person name="Totoki Y."/>
            <person name="Toyoda A."/>
            <person name="Kuroki Y."/>
            <person name="Dewar K."/>
            <person name="Lloyd C."/>
            <person name="Itoh T."/>
            <person name="Takeda T."/>
            <person name="Kim D.-W."/>
            <person name="She X."/>
            <person name="Barlow K.F."/>
            <person name="Bloom T."/>
            <person name="Bruford E."/>
            <person name="Chang J.L."/>
            <person name="Cuomo C.A."/>
            <person name="Eichler E."/>
            <person name="FitzGerald M.G."/>
            <person name="Jaffe D.B."/>
            <person name="LaButti K."/>
            <person name="Nicol R."/>
            <person name="Park H.-S."/>
            <person name="Seaman C."/>
            <person name="Sougnez C."/>
            <person name="Yang X."/>
            <person name="Zimmer A.R."/>
            <person name="Zody M.C."/>
            <person name="Birren B.W."/>
            <person name="Nusbaum C."/>
            <person name="Fujiyama A."/>
            <person name="Hattori M."/>
            <person name="Rogers J."/>
            <person name="Lander E.S."/>
            <person name="Sakaki Y."/>
        </authorList>
    </citation>
    <scope>NUCLEOTIDE SEQUENCE [LARGE SCALE GENOMIC DNA]</scope>
</reference>
<reference key="6">
    <citation type="submission" date="2005-07" db="EMBL/GenBank/DDBJ databases">
        <authorList>
            <person name="Mural R.J."/>
            <person name="Istrail S."/>
            <person name="Sutton G.G."/>
            <person name="Florea L."/>
            <person name="Halpern A.L."/>
            <person name="Mobarry C.M."/>
            <person name="Lippert R."/>
            <person name="Walenz B."/>
            <person name="Shatkay H."/>
            <person name="Dew I."/>
            <person name="Miller J.R."/>
            <person name="Flanigan M.J."/>
            <person name="Edwards N.J."/>
            <person name="Bolanos R."/>
            <person name="Fasulo D."/>
            <person name="Halldorsson B.V."/>
            <person name="Hannenhalli S."/>
            <person name="Turner R."/>
            <person name="Yooseph S."/>
            <person name="Lu F."/>
            <person name="Nusskern D.R."/>
            <person name="Shue B.C."/>
            <person name="Zheng X.H."/>
            <person name="Zhong F."/>
            <person name="Delcher A.L."/>
            <person name="Huson D.H."/>
            <person name="Kravitz S.A."/>
            <person name="Mouchard L."/>
            <person name="Reinert K."/>
            <person name="Remington K.A."/>
            <person name="Clark A.G."/>
            <person name="Waterman M.S."/>
            <person name="Eichler E.E."/>
            <person name="Adams M.D."/>
            <person name="Hunkapiller M.W."/>
            <person name="Myers E.W."/>
            <person name="Venter J.C."/>
        </authorList>
    </citation>
    <scope>NUCLEOTIDE SEQUENCE [LARGE SCALE GENOMIC DNA]</scope>
</reference>
<reference key="7">
    <citation type="journal article" date="2006" name="Invest. Ophthalmol. Vis. Sci.">
        <title>Spatial and temporal expression of MFRP and its interaction with CTRP5.</title>
        <authorList>
            <person name="Mandal M.N."/>
            <person name="Vasireddy V."/>
            <person name="Jablonski M.M."/>
            <person name="Wang X."/>
            <person name="Heckenlively J.R."/>
            <person name="Hughes B.A."/>
            <person name="Reddy G.B."/>
            <person name="Ayyagari R."/>
        </authorList>
    </citation>
    <scope>INTERACTION WITH C1QTNF5</scope>
</reference>
<reference key="8">
    <citation type="journal article" date="2006" name="J. Dermatol. Sci.">
        <title>Bone morphogenetic protein-2 modulates Wnt and frizzled expression and enhances the canonical pathway of Wnt signaling in normal keratinocytes.</title>
        <authorList>
            <person name="Yang L."/>
            <person name="Yamasaki K."/>
            <person name="Shirakata Y."/>
            <person name="Dai X."/>
            <person name="Tokumaru S."/>
            <person name="Yahata Y."/>
            <person name="Tohyama M."/>
            <person name="Hanakawa Y."/>
            <person name="Sayama K."/>
            <person name="Hashimoto K."/>
        </authorList>
    </citation>
    <scope>TISSUE SPECIFICITY</scope>
</reference>
<reference key="9">
    <citation type="journal article" date="2005" name="Ophthalmic Genet.">
        <title>Mutation screen of the membrane-type frizzled-related protein (MFRP) gene in patients with inherited retinal degenerations.</title>
        <authorList>
            <person name="Pauer G.J.T."/>
            <person name="Xi Q."/>
            <person name="Zhang K."/>
            <person name="Traboulsi E.I."/>
            <person name="Hagstrom S.A."/>
        </authorList>
    </citation>
    <scope>VARIANTS GLY-54; VAL-119; MET-136; SER-449 AND HIS-514</scope>
</reference>
<reference key="10">
    <citation type="journal article" date="2005" name="Proc. Natl. Acad. Sci. U.S.A.">
        <title>Extreme hyperopia is the result of null mutations in MFRP, which encodes a frizzled-related protein.</title>
        <authorList>
            <person name="Sundin O.H."/>
            <person name="Leppert G.S."/>
            <person name="Silva E.D."/>
            <person name="Yang J.-M."/>
            <person name="Dharmaraj S."/>
            <person name="Maumenee I.H."/>
            <person name="Santos L.C."/>
            <person name="Parsa C.F."/>
            <person name="Traboulsi E.I."/>
            <person name="Broman K.W."/>
            <person name="Dibernardo C."/>
            <person name="Sunness J.S."/>
            <person name="Toy J."/>
            <person name="Weinberg E.M."/>
        </authorList>
    </citation>
    <scope>VARIANT NNO2 THR-182</scope>
    <scope>FUNCTION</scope>
</reference>
<reference key="11">
    <citation type="journal article" date="2006" name="Mol. Vis.">
        <title>A new autosomal recessive syndrome consisting of posterior microphthalmos, retinitis pigmentosa, foveoschisis, and optic disc drusen is caused by a MFRP gene mutation.</title>
        <authorList>
            <person name="Ayala-Ramirez R."/>
            <person name="Graue-Wiechers F."/>
            <person name="Robredo V."/>
            <person name="Amato-Almanza M."/>
            <person name="Horta-Diez I."/>
            <person name="Zenteno J.C."/>
        </authorList>
    </citation>
    <scope>INVOLVEMENT IN MCOP5</scope>
</reference>
<reference key="12">
    <citation type="journal article" date="2016" name="Optom. Vis. Sci.">
        <title>Identification of MFRP mutations in chinese families with high hyperopia.</title>
        <authorList>
            <person name="Xu Y."/>
            <person name="Guan L."/>
            <person name="Xiao X."/>
            <person name="Zhang J."/>
            <person name="Li S."/>
            <person name="Jiang H."/>
            <person name="Jia X."/>
            <person name="Yin Y."/>
            <person name="Guo X."/>
            <person name="Yang Z."/>
            <person name="Zhang Q."/>
        </authorList>
    </citation>
    <scope>VARIANTS THR-222; TRP-517 AND CYS-539</scope>
</reference>
<keyword id="KW-0025">Alternative splicing</keyword>
<keyword id="KW-1003">Cell membrane</keyword>
<keyword id="KW-0225">Disease variant</keyword>
<keyword id="KW-1015">Disulfide bond</keyword>
<keyword id="KW-0325">Glycoprotein</keyword>
<keyword id="KW-0472">Membrane</keyword>
<keyword id="KW-1013">Microphthalmia</keyword>
<keyword id="KW-1267">Proteomics identification</keyword>
<keyword id="KW-1185">Reference proteome</keyword>
<keyword id="KW-0677">Repeat</keyword>
<keyword id="KW-0682">Retinitis pigmentosa</keyword>
<keyword id="KW-0735">Signal-anchor</keyword>
<keyword id="KW-0812">Transmembrane</keyword>
<keyword id="KW-1133">Transmembrane helix</keyword>
<name>MFRP_HUMAN</name>
<proteinExistence type="evidence at protein level"/>
<comment type="function">
    <text evidence="8">May play a role in eye development.</text>
</comment>
<comment type="subunit">
    <text evidence="12">Interacts with C1QTNF5.</text>
</comment>
<comment type="interaction">
    <interactant intactId="EBI-29375513">
        <id>Q9BY79</id>
    </interactant>
    <interactant intactId="EBI-19947914">
        <id>Q9BXJ0</id>
        <label>C1QTNF5</label>
    </interactant>
    <organismsDiffer>false</organismsDiffer>
    <experiments>3</experiments>
</comment>
<comment type="interaction">
    <interactant intactId="EBI-29375513">
        <id>Q9BY79</id>
    </interactant>
    <interactant intactId="EBI-34575799">
        <id>PRO_0000003535</id>
        <label>C1QTNF5</label>
        <dbReference type="UniProtKB" id="Q9BXJ0"/>
    </interactant>
    <organismsDiffer>false</organismsDiffer>
    <experiments>5</experiments>
</comment>
<comment type="interaction">
    <interactant intactId="EBI-29375513">
        <id>Q9BY79</id>
    </interactant>
    <interactant intactId="EBI-29374993">
        <id>Q8K479</id>
        <label>C1qtnf5</label>
    </interactant>
    <organismsDiffer>true</organismsDiffer>
    <experiments>6</experiments>
</comment>
<comment type="subcellular location">
    <subcellularLocation>
        <location evidence="1">Apical cell membrane</location>
        <topology evidence="1">Single-pass type II membrane protein</topology>
    </subcellularLocation>
</comment>
<comment type="alternative products">
    <event type="alternative splicing"/>
    <isoform>
        <id>Q9BY79-1</id>
        <name>1</name>
        <sequence type="displayed"/>
    </isoform>
    <isoform>
        <id>Q9BY79-2</id>
        <name>2</name>
        <sequence type="described" ref="VSP_055928 VSP_055929"/>
    </isoform>
</comment>
<comment type="tissue specificity">
    <text evidence="7 11">Specifically expressed in brain. Strongly expressed in medulla oblongata and to a lower extent in hippocampus and corpus callosum. Expressed in keratinocytes.</text>
</comment>
<comment type="developmental stage">
    <text evidence="7">Expressed in fetal brain.</text>
</comment>
<comment type="disease" evidence="8">
    <disease id="DI-02028">
        <name>Nanophthalmos 2</name>
        <acronym>NNO2</acronym>
        <description>Rare autosomal recessive disorder of eye development characterized by extreme hyperopia and small functional eyes.</description>
        <dbReference type="MIM" id="609549"/>
    </disease>
    <text>The disease is caused by variants affecting the gene represented in this entry.</text>
</comment>
<comment type="disease" evidence="13">
    <disease id="DI-00754">
        <name>Microphthalmia, isolated, 5</name>
        <acronym>MCOP5</acronym>
        <description>A disorder characterized by posterior microphthalmia, retinitis pigmentosa, foveoschisis and optic disk drusen. Microphthalmia is a disorder of eye formation, ranging from small size of a single eye to complete bilateral absence of ocular tissues. Ocular abnormalities like opacities of the cornea and lens, scaring of the retina and choroid, and other abnormalities may also be present.</description>
        <dbReference type="MIM" id="611040"/>
    </disease>
    <text>The disease is caused by variants affecting the gene represented in this entry.</text>
</comment>
<comment type="miscellaneous">
    <text>This protein is produced by a bicistronic gene which also produces the C1QTNF5 protein from a non-overlapping reading frame.</text>
</comment>